<sequence length="64" mass="7126">MDDKVETGNIDVRLLELLVCPLTKGPLEYDAERSELVSRKARLAYPVRGGIPIMLPSEARSLTE</sequence>
<comment type="similarity">
    <text evidence="1">Belongs to the UPF0434 family.</text>
</comment>
<evidence type="ECO:0000255" key="1">
    <source>
        <dbReference type="HAMAP-Rule" id="MF_01187"/>
    </source>
</evidence>
<keyword id="KW-1185">Reference proteome</keyword>
<reference key="1">
    <citation type="submission" date="2007-10" db="EMBL/GenBank/DDBJ databases">
        <title>Brucella canis ATCC 23365 whole genome shotgun sequencing project.</title>
        <authorList>
            <person name="Setubal J.C."/>
            <person name="Bowns C."/>
            <person name="Boyle S."/>
            <person name="Crasta O.R."/>
            <person name="Czar M.J."/>
            <person name="Dharmanolla C."/>
            <person name="Gillespie J.J."/>
            <person name="Kenyon R.W."/>
            <person name="Lu J."/>
            <person name="Mane S."/>
            <person name="Mohapatra S."/>
            <person name="Nagrani S."/>
            <person name="Purkayastha A."/>
            <person name="Rajasimha H.K."/>
            <person name="Shallom J.M."/>
            <person name="Shallom S."/>
            <person name="Shukla M."/>
            <person name="Snyder E.E."/>
            <person name="Sobral B.W."/>
            <person name="Wattam A.R."/>
            <person name="Will R."/>
            <person name="Williams K."/>
            <person name="Yoo H."/>
            <person name="Bruce D."/>
            <person name="Detter C."/>
            <person name="Munk C."/>
            <person name="Brettin T.S."/>
        </authorList>
    </citation>
    <scope>NUCLEOTIDE SEQUENCE [LARGE SCALE GENOMIC DNA]</scope>
    <source>
        <strain>ATCC 23365 / NCTC 10854 / RM-666</strain>
    </source>
</reference>
<gene>
    <name type="ordered locus">BCAN_B0909</name>
</gene>
<protein>
    <recommendedName>
        <fullName evidence="1">UPF0434 protein BCAN_B0909</fullName>
    </recommendedName>
</protein>
<dbReference type="EMBL" id="CP000873">
    <property type="protein sequence ID" value="ABX64059.1"/>
    <property type="molecule type" value="Genomic_DNA"/>
</dbReference>
<dbReference type="RefSeq" id="WP_002965755.1">
    <property type="nucleotide sequence ID" value="NC_010104.1"/>
</dbReference>
<dbReference type="SMR" id="A9MCH2"/>
<dbReference type="KEGG" id="bcs:BCAN_B0909"/>
<dbReference type="HOGENOM" id="CLU_155659_2_2_5"/>
<dbReference type="Proteomes" id="UP000001385">
    <property type="component" value="Chromosome II"/>
</dbReference>
<dbReference type="GO" id="GO:0005829">
    <property type="term" value="C:cytosol"/>
    <property type="evidence" value="ECO:0007669"/>
    <property type="project" value="TreeGrafter"/>
</dbReference>
<dbReference type="FunFam" id="2.20.25.10:FF:000002">
    <property type="entry name" value="UPF0434 protein YcaR"/>
    <property type="match status" value="1"/>
</dbReference>
<dbReference type="Gene3D" id="2.20.25.10">
    <property type="match status" value="1"/>
</dbReference>
<dbReference type="HAMAP" id="MF_01187">
    <property type="entry name" value="UPF0434"/>
    <property type="match status" value="1"/>
</dbReference>
<dbReference type="InterPro" id="IPR005651">
    <property type="entry name" value="Trm112-like"/>
</dbReference>
<dbReference type="PANTHER" id="PTHR33505:SF4">
    <property type="entry name" value="PROTEIN PREY, MITOCHONDRIAL"/>
    <property type="match status" value="1"/>
</dbReference>
<dbReference type="PANTHER" id="PTHR33505">
    <property type="entry name" value="ZGC:162634"/>
    <property type="match status" value="1"/>
</dbReference>
<dbReference type="Pfam" id="PF03966">
    <property type="entry name" value="Trm112p"/>
    <property type="match status" value="1"/>
</dbReference>
<dbReference type="SUPFAM" id="SSF158997">
    <property type="entry name" value="Trm112p-like"/>
    <property type="match status" value="1"/>
</dbReference>
<accession>A9MCH2</accession>
<proteinExistence type="inferred from homology"/>
<name>Y3409_BRUC2</name>
<organism>
    <name type="scientific">Brucella canis (strain ATCC 23365 / NCTC 10854 / RM-666)</name>
    <dbReference type="NCBI Taxonomy" id="483179"/>
    <lineage>
        <taxon>Bacteria</taxon>
        <taxon>Pseudomonadati</taxon>
        <taxon>Pseudomonadota</taxon>
        <taxon>Alphaproteobacteria</taxon>
        <taxon>Hyphomicrobiales</taxon>
        <taxon>Brucellaceae</taxon>
        <taxon>Brucella/Ochrobactrum group</taxon>
        <taxon>Brucella</taxon>
    </lineage>
</organism>
<feature type="chain" id="PRO_1000085454" description="UPF0434 protein BCAN_B0909">
    <location>
        <begin position="1"/>
        <end position="64"/>
    </location>
</feature>